<gene>
    <name evidence="1" type="primary">psbM</name>
</gene>
<feature type="chain" id="PRO_0000325716" description="Photosystem II reaction center protein M">
    <location>
        <begin position="1"/>
        <end position="34"/>
    </location>
</feature>
<feature type="transmembrane region" description="Helical" evidence="1">
    <location>
        <begin position="5"/>
        <end position="25"/>
    </location>
</feature>
<name>PSBM_AETCO</name>
<sequence length="34" mass="3797">MEVNILAFIATALFILIPTAFLLIIYVKTVSQND</sequence>
<protein>
    <recommendedName>
        <fullName evidence="1">Photosystem II reaction center protein M</fullName>
        <shortName evidence="1">PSII-M</shortName>
    </recommendedName>
</protein>
<reference key="1">
    <citation type="submission" date="2007-03" db="EMBL/GenBank/DDBJ databases">
        <title>Sequencing analysis of Aethionema coridifolium chloroplast DNA.</title>
        <authorList>
            <person name="Hosouchi T."/>
            <person name="Tsuruoka H."/>
            <person name="Kotani H."/>
        </authorList>
    </citation>
    <scope>NUCLEOTIDE SEQUENCE [LARGE SCALE GENOMIC DNA]</scope>
</reference>
<geneLocation type="chloroplast"/>
<keyword id="KW-0150">Chloroplast</keyword>
<keyword id="KW-0472">Membrane</keyword>
<keyword id="KW-0602">Photosynthesis</keyword>
<keyword id="KW-0604">Photosystem II</keyword>
<keyword id="KW-0934">Plastid</keyword>
<keyword id="KW-0674">Reaction center</keyword>
<keyword id="KW-0793">Thylakoid</keyword>
<keyword id="KW-0812">Transmembrane</keyword>
<keyword id="KW-1133">Transmembrane helix</keyword>
<organism>
    <name type="scientific">Aethionema cordifolium</name>
    <name type="common">Lebanon stonecress</name>
    <dbReference type="NCBI Taxonomy" id="434059"/>
    <lineage>
        <taxon>Eukaryota</taxon>
        <taxon>Viridiplantae</taxon>
        <taxon>Streptophyta</taxon>
        <taxon>Embryophyta</taxon>
        <taxon>Tracheophyta</taxon>
        <taxon>Spermatophyta</taxon>
        <taxon>Magnoliopsida</taxon>
        <taxon>eudicotyledons</taxon>
        <taxon>Gunneridae</taxon>
        <taxon>Pentapetalae</taxon>
        <taxon>rosids</taxon>
        <taxon>malvids</taxon>
        <taxon>Brassicales</taxon>
        <taxon>Brassicaceae</taxon>
        <taxon>Aethionemeae</taxon>
        <taxon>Aethionema</taxon>
    </lineage>
</organism>
<dbReference type="EMBL" id="AP009366">
    <property type="protein sequence ID" value="BAF49764.1"/>
    <property type="molecule type" value="Genomic_DNA"/>
</dbReference>
<dbReference type="RefSeq" id="YP_001122940.1">
    <property type="nucleotide sequence ID" value="NC_009265.1"/>
</dbReference>
<dbReference type="SMR" id="A4QJA9"/>
<dbReference type="GeneID" id="4968631"/>
<dbReference type="GO" id="GO:0009535">
    <property type="term" value="C:chloroplast thylakoid membrane"/>
    <property type="evidence" value="ECO:0007669"/>
    <property type="project" value="UniProtKB-SubCell"/>
</dbReference>
<dbReference type="GO" id="GO:0009523">
    <property type="term" value="C:photosystem II"/>
    <property type="evidence" value="ECO:0007669"/>
    <property type="project" value="UniProtKB-KW"/>
</dbReference>
<dbReference type="GO" id="GO:0019684">
    <property type="term" value="P:photosynthesis, light reaction"/>
    <property type="evidence" value="ECO:0007669"/>
    <property type="project" value="InterPro"/>
</dbReference>
<dbReference type="HAMAP" id="MF_00438">
    <property type="entry name" value="PSII_PsbM"/>
    <property type="match status" value="1"/>
</dbReference>
<dbReference type="InterPro" id="IPR007826">
    <property type="entry name" value="PSII_PsbM"/>
</dbReference>
<dbReference type="InterPro" id="IPR037269">
    <property type="entry name" value="PSII_PsbM_sf"/>
</dbReference>
<dbReference type="NCBIfam" id="TIGR03038">
    <property type="entry name" value="PS_II_psbM"/>
    <property type="match status" value="1"/>
</dbReference>
<dbReference type="PANTHER" id="PTHR35774">
    <property type="entry name" value="PHOTOSYSTEM II REACTION CENTER PROTEIN M"/>
    <property type="match status" value="1"/>
</dbReference>
<dbReference type="PANTHER" id="PTHR35774:SF1">
    <property type="entry name" value="PHOTOSYSTEM II REACTION CENTER PROTEIN M"/>
    <property type="match status" value="1"/>
</dbReference>
<dbReference type="Pfam" id="PF05151">
    <property type="entry name" value="PsbM"/>
    <property type="match status" value="1"/>
</dbReference>
<dbReference type="SUPFAM" id="SSF161033">
    <property type="entry name" value="Photosystem II reaction center protein M, PsbM"/>
    <property type="match status" value="1"/>
</dbReference>
<accession>A4QJA9</accession>
<proteinExistence type="inferred from homology"/>
<evidence type="ECO:0000255" key="1">
    <source>
        <dbReference type="HAMAP-Rule" id="MF_00438"/>
    </source>
</evidence>
<comment type="function">
    <text evidence="1">One of the components of the core complex of photosystem II (PSII). PSII is a light-driven water:plastoquinone oxidoreductase that uses light energy to abstract electrons from H(2)O, generating O(2) and a proton gradient subsequently used for ATP formation. It consists of a core antenna complex that captures photons, and an electron transfer chain that converts photonic excitation into a charge separation. This subunit is found at the monomer-monomer interface.</text>
</comment>
<comment type="subunit">
    <text evidence="1">PSII is composed of 1 copy each of membrane proteins PsbA, PsbB, PsbC, PsbD, PsbE, PsbF, PsbH, PsbI, PsbJ, PsbK, PsbL, PsbM, PsbT, PsbX, PsbY, PsbZ, Psb30/Ycf12, at least 3 peripheral proteins of the oxygen-evolving complex and a large number of cofactors. It forms dimeric complexes.</text>
</comment>
<comment type="subcellular location">
    <subcellularLocation>
        <location evidence="1">Plastid</location>
        <location evidence="1">Chloroplast thylakoid membrane</location>
        <topology evidence="1">Single-pass membrane protein</topology>
    </subcellularLocation>
</comment>
<comment type="similarity">
    <text evidence="1">Belongs to the PsbM family.</text>
</comment>